<feature type="chain" id="PRO_0000461317" description="Formate-nitrite transporter">
    <location>
        <begin position="1"/>
        <end position="309"/>
    </location>
</feature>
<feature type="topological domain" description="Cytoplasmic" evidence="14">
    <location>
        <begin position="1"/>
        <end position="19"/>
    </location>
</feature>
<feature type="intramembrane region" description="Helical" evidence="6 17 18 21">
    <location>
        <begin position="20"/>
        <end position="35"/>
    </location>
</feature>
<feature type="topological domain" description="Cytoplasmic" evidence="14">
    <location>
        <begin position="36"/>
        <end position="40"/>
    </location>
</feature>
<feature type="transmembrane region" description="Helical" evidence="6 7 17 18 19 20 21">
    <location>
        <begin position="41"/>
        <end position="68"/>
    </location>
</feature>
<feature type="topological domain" description="Extracellular" evidence="14">
    <location>
        <begin position="69"/>
        <end position="79"/>
    </location>
</feature>
<feature type="transmembrane region" description="Helical" evidence="6 7 17 18 19 20 21">
    <location>
        <begin position="80"/>
        <end position="100"/>
    </location>
</feature>
<feature type="topological domain" description="Cytoplasmic" evidence="14">
    <location>
        <begin position="101"/>
        <end position="122"/>
    </location>
</feature>
<feature type="transmembrane region" description="Helical" evidence="6 7 17 18 19 20 21">
    <location>
        <begin position="123"/>
        <end position="150"/>
    </location>
</feature>
<feature type="topological domain" description="Extracellular" evidence="14">
    <location>
        <begin position="151"/>
        <end position="163"/>
    </location>
</feature>
<feature type="intramembrane region" description="Helical" evidence="6 17 18 21">
    <location>
        <begin position="164"/>
        <end position="179"/>
    </location>
</feature>
<feature type="topological domain" description="Extracellular" evidence="14">
    <location>
        <begin position="180"/>
        <end position="181"/>
    </location>
</feature>
<feature type="transmembrane region" description="Helical" evidence="6 7 17 18 19 20 21">
    <location>
        <begin position="182"/>
        <end position="206"/>
    </location>
</feature>
<feature type="topological domain" description="Cytoplasmic" evidence="14">
    <location>
        <begin position="207"/>
        <end position="209"/>
    </location>
</feature>
<feature type="transmembrane region" description="Helical" evidence="6 7 17 18 19 20 21">
    <location>
        <begin position="210"/>
        <end position="226"/>
    </location>
</feature>
<feature type="topological domain" description="Extracellular" evidence="14">
    <location>
        <begin position="227"/>
        <end position="249"/>
    </location>
</feature>
<feature type="transmembrane region" description="Helical" evidence="6 7 17 18 19 20 21">
    <location>
        <begin position="250"/>
        <end position="280"/>
    </location>
</feature>
<feature type="topological domain" description="Cytoplasmic" evidence="14">
    <location>
        <begin position="281"/>
        <end position="309"/>
    </location>
</feature>
<feature type="sequence variant" description="Appers in parasites grown in the presence of BH267.meta inhibitor; modestly increases resistance to MMV007839 and BH296 with no significant effects on BH267.meta sensitivity." evidence="8">
    <original>G</original>
    <variation>E</variation>
    <location>
        <position position="21"/>
    </location>
</feature>
<feature type="sequence variant" description="Appers in parasites grown in the presence of BH267.meta or MMV007839 inhibitors; increases resistance to MMV007839, BH296, BH267.meta and MMV000972. Reduces lactate transport with no significant effects on the growth rates of asexual blood-stage parasites." evidence="4 8">
    <original>G</original>
    <variation>S</variation>
    <location>
        <position position="107"/>
    </location>
</feature>
<feature type="sequence variant" description="Appers in parasites grown in the presence of BH267.meta inhibitor; increases resistance to BH296 and moderately to MMV007839 and BH267.meta." evidence="8">
    <original>V</original>
    <variation>L</variation>
    <location>
        <position position="196"/>
    </location>
</feature>
<feature type="mutagenesis site" description="Does not affect growth rates of yeast cells when transporter expressed in the strain lacking endogenous monocarboxylate transporters." evidence="8">
    <original>G</original>
    <variation>E</variation>
    <location>
        <position position="21"/>
    </location>
</feature>
<feature type="mutagenesis site" description="Increases lactate transport." evidence="6">
    <original>K</original>
    <variation>A</variation>
    <location>
        <position position="35"/>
    </location>
</feature>
<feature type="mutagenesis site" description="Moderately decreases lactate transport." evidence="6">
    <original>F</original>
    <variation>A</variation>
    <location>
        <position position="90"/>
    </location>
</feature>
<feature type="mutagenesis site" description="Increases lactate transport." evidence="6">
    <original>F</original>
    <variation>A</variation>
    <location>
        <position position="94"/>
    </location>
</feature>
<feature type="mutagenesis site" description="Decreases binding affinity for MMV007839 inhibitor." evidence="7">
    <original>T</original>
    <variation>A</variation>
    <location>
        <position position="106"/>
    </location>
</feature>
<feature type="mutagenesis site" description="Does not affect growth rates of yeast cells when transporter expressed in the strain lacking endogenous monocarboxylate transporters. Abolishes binding with MMV007839 inhibitor." evidence="7 8">
    <original>G</original>
    <variation>S</variation>
    <location>
        <position position="107"/>
    </location>
</feature>
<feature type="mutagenesis site" description="Increases lactate transport." evidence="6">
    <original>K</original>
    <variation>A</variation>
    <location>
        <position position="177"/>
    </location>
</feature>
<feature type="mutagenesis site" description="Results in delayed growth of yeast cells when transporter expressed in the strain lacking endogenous monocarboxylate transporters." evidence="8">
    <original>V</original>
    <variation>L</variation>
    <location>
        <position position="196"/>
    </location>
</feature>
<feature type="mutagenesis site" description="Abolishes lactate transport. Abolishes binding with MMV007839 inhibitor." evidence="6 7">
    <original>H</original>
    <variation>A</variation>
    <location>
        <position position="230"/>
    </location>
</feature>
<feature type="mutagenesis site" description="Abolishes lactate transport." evidence="6">
    <original>H</original>
    <variation>N</variation>
    <location>
        <position position="230"/>
    </location>
</feature>
<feature type="strand" evidence="22">
    <location>
        <begin position="13"/>
        <end position="16"/>
    </location>
</feature>
<feature type="helix" evidence="23">
    <location>
        <begin position="22"/>
        <end position="37"/>
    </location>
</feature>
<feature type="helix" evidence="23">
    <location>
        <begin position="40"/>
        <end position="67"/>
    </location>
</feature>
<feature type="helix" evidence="23">
    <location>
        <begin position="71"/>
        <end position="77"/>
    </location>
</feature>
<feature type="helix" evidence="23">
    <location>
        <begin position="80"/>
        <end position="89"/>
    </location>
</feature>
<feature type="helix" evidence="23">
    <location>
        <begin position="92"/>
        <end position="99"/>
    </location>
</feature>
<feature type="helix" evidence="23">
    <location>
        <begin position="105"/>
        <end position="117"/>
    </location>
</feature>
<feature type="helix" evidence="23">
    <location>
        <begin position="123"/>
        <end position="147"/>
    </location>
</feature>
<feature type="turn" evidence="23">
    <location>
        <begin position="148"/>
        <end position="153"/>
    </location>
</feature>
<feature type="turn" evidence="23">
    <location>
        <begin position="161"/>
        <end position="164"/>
    </location>
</feature>
<feature type="helix" evidence="23">
    <location>
        <begin position="165"/>
        <end position="177"/>
    </location>
</feature>
<feature type="helix" evidence="23">
    <location>
        <begin position="182"/>
        <end position="205"/>
    </location>
</feature>
<feature type="helix" evidence="23">
    <location>
        <begin position="210"/>
        <end position="226"/>
    </location>
</feature>
<feature type="helix" evidence="23">
    <location>
        <begin position="231"/>
        <end position="243"/>
    </location>
</feature>
<feature type="helix" evidence="23">
    <location>
        <begin position="250"/>
        <end position="254"/>
    </location>
</feature>
<feature type="turn" evidence="23">
    <location>
        <begin position="255"/>
        <end position="257"/>
    </location>
</feature>
<feature type="helix" evidence="23">
    <location>
        <begin position="258"/>
        <end position="270"/>
    </location>
</feature>
<feature type="turn" evidence="23">
    <location>
        <begin position="271"/>
        <end position="274"/>
    </location>
</feature>
<feature type="helix" evidence="23">
    <location>
        <begin position="275"/>
        <end position="290"/>
    </location>
</feature>
<name>FNT_PLAF7</name>
<accession>O77389</accession>
<proteinExistence type="evidence at protein level"/>
<sequence>MPPNNSKYVLDPVSIKSVCGGEESYIRCVEYGKKKAHYSNLNLLAKAILAGMFVGLCAHASGIAGGLFYYHKLREIVGASMSVFVYGFTFPIAFMCIICTGSDLFTGNTLAVTMALYEKKVKLLDYLRVMTISLFGNYVGAVSFAFFVSYLSGAFTNVHAVEKNHFFQFLNDIAEKKVHHTFVECVSLAVGCNIFVCLAVYFVLTLKDGAGYVFSVFFAVYAFAIAGYEHIIANIYTLNIALMVNTKITVYQAYIKNLLPTLLGNYIAGAIVLGLPLYFIYKEHYYNFERSKRDNNDAQMKSLSIELRN</sequence>
<protein>
    <recommendedName>
        <fullName evidence="9 11 12 13">Formate-nitrite transporter</fullName>
        <shortName evidence="9 10 11 12 13">PfFNT</shortName>
    </recommendedName>
    <alternativeName>
        <fullName evidence="9">Lactate/H(+) symporter</fullName>
    </alternativeName>
    <alternativeName>
        <fullName evidence="11 13">Lactate/H(+) transporter</fullName>
    </alternativeName>
</protein>
<evidence type="ECO:0000255" key="1"/>
<evidence type="ECO:0000269" key="2">
    <source>
    </source>
</evidence>
<evidence type="ECO:0000269" key="3">
    <source>
    </source>
</evidence>
<evidence type="ECO:0000269" key="4">
    <source>
    </source>
</evidence>
<evidence type="ECO:0000269" key="5">
    <source>
    </source>
</evidence>
<evidence type="ECO:0000269" key="6">
    <source>
    </source>
</evidence>
<evidence type="ECO:0000269" key="7">
    <source>
    </source>
</evidence>
<evidence type="ECO:0000269" key="8">
    <source>
    </source>
</evidence>
<evidence type="ECO:0000303" key="9">
    <source>
    </source>
</evidence>
<evidence type="ECO:0000303" key="10">
    <source>
    </source>
</evidence>
<evidence type="ECO:0000303" key="11">
    <source>
    </source>
</evidence>
<evidence type="ECO:0000303" key="12">
    <source>
    </source>
</evidence>
<evidence type="ECO:0000303" key="13">
    <source>
    </source>
</evidence>
<evidence type="ECO:0000305" key="14"/>
<evidence type="ECO:0000312" key="15">
    <source>
        <dbReference type="EMBL" id="CAB11145.2"/>
    </source>
</evidence>
<evidence type="ECO:0000312" key="16">
    <source>
        <dbReference type="Proteomes" id="UP000001450"/>
    </source>
</evidence>
<evidence type="ECO:0007744" key="17">
    <source>
        <dbReference type="PDB" id="6VQQ"/>
    </source>
</evidence>
<evidence type="ECO:0007744" key="18">
    <source>
        <dbReference type="PDB" id="6VQR"/>
    </source>
</evidence>
<evidence type="ECO:0007744" key="19">
    <source>
        <dbReference type="PDB" id="7E26"/>
    </source>
</evidence>
<evidence type="ECO:0007744" key="20">
    <source>
        <dbReference type="PDB" id="7E27"/>
    </source>
</evidence>
<evidence type="ECO:0007744" key="21">
    <source>
        <dbReference type="PDB" id="7MXY"/>
    </source>
</evidence>
<evidence type="ECO:0007829" key="22">
    <source>
        <dbReference type="PDB" id="7E26"/>
    </source>
</evidence>
<evidence type="ECO:0007829" key="23">
    <source>
        <dbReference type="PDB" id="7MXY"/>
    </source>
</evidence>
<gene>
    <name evidence="15" type="ORF">PF3D7_0316600</name>
</gene>
<keyword id="KW-0002">3D-structure</keyword>
<keyword id="KW-1003">Cell membrane</keyword>
<keyword id="KW-0472">Membrane</keyword>
<keyword id="KW-1185">Reference proteome</keyword>
<keyword id="KW-0812">Transmembrane</keyword>
<keyword id="KW-1133">Transmembrane helix</keyword>
<keyword id="KW-0813">Transport</keyword>
<keyword id="KW-0926">Vacuole</keyword>
<dbReference type="EMBL" id="AL844502">
    <property type="protein sequence ID" value="CAB11145.2"/>
    <property type="molecule type" value="Genomic_DNA"/>
</dbReference>
<dbReference type="PIR" id="T18506">
    <property type="entry name" value="T18506"/>
</dbReference>
<dbReference type="RefSeq" id="XP_001351236.1">
    <property type="nucleotide sequence ID" value="XM_001351200.1"/>
</dbReference>
<dbReference type="PDB" id="6VQQ">
    <property type="method" value="EM"/>
    <property type="resolution" value="2.56 A"/>
    <property type="chains" value="A/B/C/D/E=1-309"/>
</dbReference>
<dbReference type="PDB" id="6VQR">
    <property type="method" value="EM"/>
    <property type="resolution" value="2.78 A"/>
    <property type="chains" value="A/B/C/D/E=1-309"/>
</dbReference>
<dbReference type="PDB" id="7E26">
    <property type="method" value="EM"/>
    <property type="resolution" value="2.29 A"/>
    <property type="chains" value="A/B/C/D/E=1-309"/>
</dbReference>
<dbReference type="PDB" id="7E27">
    <property type="method" value="EM"/>
    <property type="resolution" value="2.29 A"/>
    <property type="chains" value="A/B/C/D/E=1-309"/>
</dbReference>
<dbReference type="PDB" id="7MXY">
    <property type="method" value="EM"/>
    <property type="resolution" value="2.18 A"/>
    <property type="chains" value="A/B/C/D/E=1-309"/>
</dbReference>
<dbReference type="PDBsum" id="6VQQ"/>
<dbReference type="PDBsum" id="6VQR"/>
<dbReference type="PDBsum" id="7E26"/>
<dbReference type="PDBsum" id="7E27"/>
<dbReference type="PDBsum" id="7MXY"/>
<dbReference type="EMDB" id="EMD-21354"/>
<dbReference type="EMDB" id="EMD-21355"/>
<dbReference type="EMDB" id="EMD-24076"/>
<dbReference type="EMDB" id="EMD-30952"/>
<dbReference type="EMDB" id="EMD-30953"/>
<dbReference type="SMR" id="O77389"/>
<dbReference type="STRING" id="36329.O77389"/>
<dbReference type="TCDB" id="1.A.16.2.9">
    <property type="family name" value="the formate-nitrite transporter (fnt) family"/>
</dbReference>
<dbReference type="SwissPalm" id="O77389"/>
<dbReference type="PaxDb" id="5833-PFC0725c"/>
<dbReference type="EnsemblProtists" id="CAB11145">
    <property type="protein sequence ID" value="CAB11145"/>
    <property type="gene ID" value="PF3D7_0316600"/>
</dbReference>
<dbReference type="GeneID" id="814480"/>
<dbReference type="KEGG" id="pfa:PF3D7_0316600"/>
<dbReference type="VEuPathDB" id="PlasmoDB:PF3D7_0316600"/>
<dbReference type="HOGENOM" id="CLU_036896_1_1_1"/>
<dbReference type="InParanoid" id="O77389"/>
<dbReference type="OMA" id="SIRPLVM"/>
<dbReference type="OrthoDB" id="4829at2759"/>
<dbReference type="PhylomeDB" id="O77389"/>
<dbReference type="Proteomes" id="UP000001450">
    <property type="component" value="Chromosome 3"/>
</dbReference>
<dbReference type="GO" id="GO:0005886">
    <property type="term" value="C:plasma membrane"/>
    <property type="evidence" value="ECO:0000318"/>
    <property type="project" value="GO_Central"/>
</dbReference>
<dbReference type="GO" id="GO:0005774">
    <property type="term" value="C:vacuolar membrane"/>
    <property type="evidence" value="ECO:0007669"/>
    <property type="project" value="UniProtKB-SubCell"/>
</dbReference>
<dbReference type="GO" id="GO:0015513">
    <property type="term" value="F:high-affinity secondary active nitrite transmembrane transporter activity"/>
    <property type="evidence" value="ECO:0000318"/>
    <property type="project" value="GO_Central"/>
</dbReference>
<dbReference type="GO" id="GO:0015650">
    <property type="term" value="F:lactate:proton symporter activity"/>
    <property type="evidence" value="ECO:0000314"/>
    <property type="project" value="GeneDB"/>
</dbReference>
<dbReference type="GO" id="GO:0035873">
    <property type="term" value="P:lactate transmembrane transport"/>
    <property type="evidence" value="ECO:0000314"/>
    <property type="project" value="GeneDB"/>
</dbReference>
<dbReference type="GO" id="GO:0015707">
    <property type="term" value="P:nitrite transport"/>
    <property type="evidence" value="ECO:0000318"/>
    <property type="project" value="GO_Central"/>
</dbReference>
<dbReference type="FunFam" id="1.20.1080.10:FF:000039">
    <property type="entry name" value="Formate-nitrite transporter, putative"/>
    <property type="match status" value="1"/>
</dbReference>
<dbReference type="Gene3D" id="1.20.1080.10">
    <property type="entry name" value="Glycerol uptake facilitator protein"/>
    <property type="match status" value="1"/>
</dbReference>
<dbReference type="InterPro" id="IPR023271">
    <property type="entry name" value="Aquaporin-like"/>
</dbReference>
<dbReference type="InterPro" id="IPR000292">
    <property type="entry name" value="For/NO2_transpt"/>
</dbReference>
<dbReference type="InterPro" id="IPR024002">
    <property type="entry name" value="For/NO2_transpt_CS"/>
</dbReference>
<dbReference type="NCBIfam" id="TIGR00790">
    <property type="entry name" value="fnt"/>
    <property type="match status" value="1"/>
</dbReference>
<dbReference type="PANTHER" id="PTHR30520">
    <property type="entry name" value="FORMATE TRANSPORTER-RELATED"/>
    <property type="match status" value="1"/>
</dbReference>
<dbReference type="PANTHER" id="PTHR30520:SF6">
    <property type="entry name" value="FORMATE_NITRATE FAMILY TRANSPORTER (EUROFUNG)"/>
    <property type="match status" value="1"/>
</dbReference>
<dbReference type="Pfam" id="PF01226">
    <property type="entry name" value="Form_Nir_trans"/>
    <property type="match status" value="1"/>
</dbReference>
<dbReference type="PROSITE" id="PS01006">
    <property type="entry name" value="FORMATE_NITRITE_TP_2"/>
    <property type="match status" value="1"/>
</dbReference>
<reference evidence="16" key="1">
    <citation type="journal article" date="1999" name="Nature">
        <title>The complete nucleotide sequence of chromosome 3 of Plasmodium falciparum.</title>
        <authorList>
            <person name="Bowman S."/>
            <person name="Lawson D."/>
            <person name="Basham D."/>
            <person name="Brown D."/>
            <person name="Chillingworth T."/>
            <person name="Churcher C.M."/>
            <person name="Craig A."/>
            <person name="Davies R.M."/>
            <person name="Devlin K."/>
            <person name="Feltwell T."/>
            <person name="Gentles S."/>
            <person name="Gwilliam R."/>
            <person name="Hamlin N."/>
            <person name="Harris D."/>
            <person name="Holroyd S."/>
            <person name="Hornsby T."/>
            <person name="Horrocks P."/>
            <person name="Jagels K."/>
            <person name="Jassal B."/>
            <person name="Kyes S."/>
            <person name="McLean J."/>
            <person name="Moule S."/>
            <person name="Mungall K.L."/>
            <person name="Murphy L."/>
            <person name="Oliver K."/>
            <person name="Quail M.A."/>
            <person name="Rajandream M.A."/>
            <person name="Rutter S."/>
            <person name="Skelton J."/>
            <person name="Squares R."/>
            <person name="Squares S."/>
            <person name="Sulston J.E."/>
            <person name="Whitehead S."/>
            <person name="Woodward J.R."/>
            <person name="Newbold C."/>
            <person name="Barrell B.G."/>
        </authorList>
    </citation>
    <scope>NUCLEOTIDE SEQUENCE [LARGE SCALE GENOMIC DNA]</scope>
    <source>
        <strain evidence="16">3D7</strain>
    </source>
</reference>
<reference evidence="16" key="2">
    <citation type="journal article" date="2002" name="Nature">
        <title>Genome sequence of the human malaria parasite Plasmodium falciparum.</title>
        <authorList>
            <person name="Gardner M.J."/>
            <person name="Hall N."/>
            <person name="Fung E."/>
            <person name="White O."/>
            <person name="Berriman M."/>
            <person name="Hyman R.W."/>
            <person name="Carlton J.M."/>
            <person name="Pain A."/>
            <person name="Nelson K.E."/>
            <person name="Bowman S."/>
            <person name="Paulsen I.T."/>
            <person name="James K.D."/>
            <person name="Eisen J.A."/>
            <person name="Rutherford K.M."/>
            <person name="Salzberg S.L."/>
            <person name="Craig A."/>
            <person name="Kyes S."/>
            <person name="Chan M.-S."/>
            <person name="Nene V."/>
            <person name="Shallom S.J."/>
            <person name="Suh B."/>
            <person name="Peterson J."/>
            <person name="Angiuoli S."/>
            <person name="Pertea M."/>
            <person name="Allen J."/>
            <person name="Selengut J."/>
            <person name="Haft D."/>
            <person name="Mather M.W."/>
            <person name="Vaidya A.B."/>
            <person name="Martin D.M.A."/>
            <person name="Fairlamb A.H."/>
            <person name="Fraunholz M.J."/>
            <person name="Roos D.S."/>
            <person name="Ralph S.A."/>
            <person name="McFadden G.I."/>
            <person name="Cummings L.M."/>
            <person name="Subramanian G.M."/>
            <person name="Mungall C."/>
            <person name="Venter J.C."/>
            <person name="Carucci D.J."/>
            <person name="Hoffman S.L."/>
            <person name="Newbold C."/>
            <person name="Davis R.W."/>
            <person name="Fraser C.M."/>
            <person name="Barrell B.G."/>
        </authorList>
    </citation>
    <scope>NUCLEOTIDE SEQUENCE [LARGE SCALE GENOMIC DNA]</scope>
    <source>
        <strain evidence="16">3D7</strain>
    </source>
</reference>
<reference evidence="16" key="3">
    <citation type="journal article" date="2002" name="Nature">
        <title>Sequence of Plasmodium falciparum chromosomes 1, 3-9 and 13.</title>
        <authorList>
            <person name="Hall N."/>
            <person name="Pain A."/>
            <person name="Berriman M."/>
            <person name="Churcher C.M."/>
            <person name="Harris B."/>
            <person name="Harris D."/>
            <person name="Mungall K.L."/>
            <person name="Bowman S."/>
            <person name="Atkin R."/>
            <person name="Baker S."/>
            <person name="Barron A."/>
            <person name="Brooks K."/>
            <person name="Buckee C.O."/>
            <person name="Burrows C."/>
            <person name="Cherevach I."/>
            <person name="Chillingworth C."/>
            <person name="Chillingworth T."/>
            <person name="Christodoulou Z."/>
            <person name="Clark L."/>
            <person name="Clark R."/>
            <person name="Corton C."/>
            <person name="Cronin A."/>
            <person name="Davies R.M."/>
            <person name="Davis P."/>
            <person name="Dear P."/>
            <person name="Dearden F."/>
            <person name="Doggett J."/>
            <person name="Feltwell T."/>
            <person name="Goble A."/>
            <person name="Goodhead I."/>
            <person name="Gwilliam R."/>
            <person name="Hamlin N."/>
            <person name="Hance Z."/>
            <person name="Harper D."/>
            <person name="Hauser H."/>
            <person name="Hornsby T."/>
            <person name="Holroyd S."/>
            <person name="Horrocks P."/>
            <person name="Humphray S."/>
            <person name="Jagels K."/>
            <person name="James K.D."/>
            <person name="Johnson D."/>
            <person name="Kerhornou A."/>
            <person name="Knights A."/>
            <person name="Konfortov B."/>
            <person name="Kyes S."/>
            <person name="Larke N."/>
            <person name="Lawson D."/>
            <person name="Lennard N."/>
            <person name="Line A."/>
            <person name="Maddison M."/>
            <person name="Mclean J."/>
            <person name="Mooney P."/>
            <person name="Moule S."/>
            <person name="Murphy L."/>
            <person name="Oliver K."/>
            <person name="Ormond D."/>
            <person name="Price C."/>
            <person name="Quail M.A."/>
            <person name="Rabbinowitsch E."/>
            <person name="Rajandream M.A."/>
            <person name="Rutter S."/>
            <person name="Rutherford K.M."/>
            <person name="Sanders M."/>
            <person name="Simmonds M."/>
            <person name="Seeger K."/>
            <person name="Sharp S."/>
            <person name="Smith R."/>
            <person name="Squares R."/>
            <person name="Squares S."/>
            <person name="Stevens K."/>
            <person name="Taylor K."/>
            <person name="Tivey A."/>
            <person name="Unwin L."/>
            <person name="Whitehead S."/>
            <person name="Woodward J.R."/>
            <person name="Sulston J.E."/>
            <person name="Craig A."/>
            <person name="Newbold C."/>
            <person name="Barrell B.G."/>
        </authorList>
    </citation>
    <scope>NUCLEOTIDE SEQUENCE [LARGE SCALE GENOMIC DNA]</scope>
    <source>
        <strain evidence="16">3D7</strain>
    </source>
</reference>
<reference evidence="14" key="4">
    <citation type="journal article" date="2015" name="Nat. Commun.">
        <title>Identity of a Plasmodium lactate/H(+) symporter structurally unrelated to human transporters.</title>
        <authorList>
            <person name="Wu B."/>
            <person name="Rambow J."/>
            <person name="Bock S."/>
            <person name="Holm-Bertelsen J."/>
            <person name="Wiechert M."/>
            <person name="Soares A.B."/>
            <person name="Spielmann T."/>
            <person name="Beitz E."/>
        </authorList>
    </citation>
    <scope>FUNCTION</scope>
    <scope>TRANSPORTER ACTIVITY</scope>
    <scope>ACTIVITY REGULATION</scope>
    <scope>BIOPHYSICOCHEMICAL PROPERTIES</scope>
    <scope>SUBUNIT</scope>
    <scope>SUBCELLULAR LOCATION</scope>
    <scope>DEVELOPMENTAL STAGE</scope>
    <source>
        <strain evidence="9">3D7</strain>
    </source>
</reference>
<reference evidence="14" key="5">
    <citation type="journal article" date="2015" name="Nat. Commun.">
        <title>A lactate and formate transporter in the intraerythrocytic malaria parasite, Plasmodium falciparum.</title>
        <authorList>
            <person name="Marchetti R.V."/>
            <person name="Lehane A.M."/>
            <person name="Shafik S.H."/>
            <person name="Winterberg M."/>
            <person name="Martin R.E."/>
            <person name="Kirk K."/>
        </authorList>
    </citation>
    <scope>FUNCTION</scope>
    <scope>TRANSPORTER ACTIVITY</scope>
    <scope>SUBCELLULAR LOCATION</scope>
</reference>
<reference evidence="14" key="6">
    <citation type="journal article" date="2017" name="PLoS Pathog.">
        <title>The Malaria Parasite's Lactate Transporter PfFNT Is the Target of Antiplasmodial Compounds Identified in Whole Cell Phenotypic Screens.</title>
        <authorList>
            <person name="Hapuarachchi S.V."/>
            <person name="Cobbold S.A."/>
            <person name="Shafik S.H."/>
            <person name="Dennis A.S."/>
            <person name="McConville M.J."/>
            <person name="Martin R.E."/>
            <person name="Kirk K."/>
            <person name="Lehane A.M."/>
        </authorList>
    </citation>
    <scope>FUNCTION</scope>
    <scope>TRANSPORTER ACTIVITY</scope>
    <scope>ACTIVITY REGULATION</scope>
    <scope>VARIANT SER-107</scope>
    <source>
        <strain evidence="11">3D7</strain>
        <strain evidence="11">Dd2</strain>
    </source>
</reference>
<reference evidence="14" key="7">
    <citation type="journal article" date="2019" name="J. Biol. Chem.">
        <title>Formate-nitrite transporters carrying nonprotonatable amide amino acids instead of a central histidine maintain pH-dependent transport.</title>
        <authorList>
            <person name="Helmstetter F."/>
            <person name="Arnold P."/>
            <person name="Hoeger B."/>
            <person name="Petersen L.M."/>
            <person name="Beitz E."/>
        </authorList>
    </citation>
    <scope>FUNCTION</scope>
</reference>
<reference evidence="14" key="8">
    <citation type="journal article" date="2023" name="Antimicrob. Agents Chemother.">
        <title>The Plasmodium Lactate/H+ Transporter PfFNT Is Essential and Druggable In Vivo.</title>
        <authorList>
            <person name="Davies H."/>
            <person name="Bergmann B."/>
            <person name="Walloch P."/>
            <person name="Nerlich C."/>
            <person name="Hansen C."/>
            <person name="Wittlin S."/>
            <person name="Spielmann T."/>
            <person name="Treeck M."/>
            <person name="Beitz E."/>
        </authorList>
    </citation>
    <scope>FUNCTION</scope>
    <scope>TRANSPORTER ACTIVITY</scope>
    <scope>ACTIVITY REGULATION</scope>
    <scope>DISRUPTION PHENOTYPE</scope>
    <scope>MUTAGENESIS OF GLY-21; GLY-107 AND VAL-196</scope>
    <scope>VARIANTS GLU-21; SER-107 AND LEU-196</scope>
    <source>
        <strain evidence="13">3D7</strain>
        <strain evidence="13">NF54</strain>
    </source>
</reference>
<reference evidence="17 18 21" key="9">
    <citation type="journal article" date="2021" name="EMBO Rep.">
        <title>Structural basis of transport and inhibition of the Plasmodium falciparum transporter PfFNT.</title>
        <authorList>
            <person name="Lyu M."/>
            <person name="Su C.C."/>
            <person name="Kazura J.W."/>
            <person name="Yu E.W."/>
        </authorList>
    </citation>
    <scope>STRUCTURE BY ELECTRON MICROSCOPY (2.56 ANGSTROMS) IN COMPLEX WITH INHIBITOR MMV007839</scope>
    <scope>FUNCTION</scope>
    <scope>SUBUNIT</scope>
    <scope>MUTAGENESIS OF LYS-35; PHE-90; PHE-94; LYS-177 AND HIS-230</scope>
</reference>
<reference evidence="19 20" key="10">
    <citation type="journal article" date="2021" name="PLoS Biol.">
        <title>Structural characterization of the Plasmodium falciparum lactate transporter PfFNT alone and in complex with antimalarial compound MMV007839 reveals its inhibition mechanism.</title>
        <authorList>
            <person name="Peng X."/>
            <person name="Wang N."/>
            <person name="Zhu A."/>
            <person name="Xu H."/>
            <person name="Li J."/>
            <person name="Zhou Y."/>
            <person name="Wang C."/>
            <person name="Xiao Q."/>
            <person name="Guo L."/>
            <person name="Liu F."/>
            <person name="Jia Z.J."/>
            <person name="Duan H."/>
            <person name="Hu J."/>
            <person name="Yuan W."/>
            <person name="Geng J."/>
            <person name="Yan C."/>
            <person name="Jiang X."/>
            <person name="Deng D."/>
        </authorList>
    </citation>
    <scope>STRUCTURE BY ELECTRON MICROSCOPY (2.29 ANGSTROMS) IN COMPLEX WITH INHIBITOR MMV007839</scope>
    <scope>SUBUNIT</scope>
    <scope>MUTAGENESIS OF THR-106; GLY-107 AND HIS-230</scope>
</reference>
<organism evidence="16">
    <name type="scientific">Plasmodium falciparum (isolate 3D7)</name>
    <dbReference type="NCBI Taxonomy" id="36329"/>
    <lineage>
        <taxon>Eukaryota</taxon>
        <taxon>Sar</taxon>
        <taxon>Alveolata</taxon>
        <taxon>Apicomplexa</taxon>
        <taxon>Aconoidasida</taxon>
        <taxon>Haemosporida</taxon>
        <taxon>Plasmodiidae</taxon>
        <taxon>Plasmodium</taxon>
        <taxon>Plasmodium (Laverania)</taxon>
    </lineage>
</organism>
<comment type="function">
    <text evidence="2 3 4 5 6 8">Monocarboxylate-proton symporter that mediates the efflux of the waste product lactate in the intraerythrocytic parasites; active in acidic-to-neutral pH range (PubMed:25669138, PubMed:25823844, PubMed:28178359, PubMed:30455351). Transports L-lactate (PubMed:25669138, PubMed:25823844, PubMed:28178359, PubMed:33471955, PubMed:37428074). Transports D-lactate, pyruvate, acetate and formate (PubMed:25669138, PubMed:25823844, PubMed:30455351). Essential for asexual growth but dispensable for the development of gametocytes (PubMed:37428074).</text>
</comment>
<comment type="catalytic activity">
    <reaction evidence="2 3 4 8">
        <text>(S)-lactate(in) + H(+)(in) = (S)-lactate(out) + H(+)(out)</text>
        <dbReference type="Rhea" id="RHEA:29415"/>
        <dbReference type="ChEBI" id="CHEBI:15378"/>
        <dbReference type="ChEBI" id="CHEBI:16651"/>
    </reaction>
</comment>
<comment type="catalytic activity">
    <reaction evidence="2 3">
        <text>formate(in) + H(+)(in) = formate(out) + H(+)(out)</text>
        <dbReference type="Rhea" id="RHEA:80887"/>
        <dbReference type="ChEBI" id="CHEBI:15378"/>
        <dbReference type="ChEBI" id="CHEBI:15740"/>
    </reaction>
</comment>
<comment type="catalytic activity">
    <reaction evidence="2">
        <text>pyruvate(out) + H(+)(out) = pyruvate(in) + H(+)(in)</text>
        <dbReference type="Rhea" id="RHEA:64720"/>
        <dbReference type="ChEBI" id="CHEBI:15361"/>
        <dbReference type="ChEBI" id="CHEBI:15378"/>
    </reaction>
</comment>
<comment type="catalytic activity">
    <reaction evidence="2">
        <text>acetate(out) + H(+)(out) = acetate(in) + H(+)(in)</text>
        <dbReference type="Rhea" id="RHEA:71803"/>
        <dbReference type="ChEBI" id="CHEBI:15378"/>
        <dbReference type="ChEBI" id="CHEBI:30089"/>
    </reaction>
</comment>
<comment type="activity regulation">
    <text evidence="2 4 8">Inhibited by diethylpyrocarbonate (DEPC) (PubMed:25669138). Protonophores, such as 2,4-dinitrophenol and carbonylcyanide-3-chlorophenylhydrazone, abolish transport (PubMed:25669138). Inhibited by phloretin, furosemide, alpha-cyano-4-hydroxy-cinnamate and alpha-fluorocinnamate (PubMed:25669138). Inhibited by the Malaria Box compound MMV007839 and its derivatives BH296 and BH267.meta (PubMed:28178359, PubMed:37428074). Inhibited by the Malaria Box compound MMV000972 (PubMed:28178359). Inhibited by broad-specificity anion transport inhibitor NPPB (PubMed:28178359).</text>
</comment>
<comment type="biophysicochemical properties">
    <phDependence>
        <text evidence="2">Optimum pH is 3.9.</text>
    </phDependence>
</comment>
<comment type="subunit">
    <text evidence="2 6 7">Homopentamer.</text>
</comment>
<comment type="subcellular location">
    <subcellularLocation>
        <location evidence="2 3">Cell membrane</location>
        <topology evidence="1">Multi-pass membrane protein</topology>
    </subcellularLocation>
    <subcellularLocation>
        <location evidence="3">Vacuole membrane</location>
        <topology evidence="1">Multi-pass membrane protein</topology>
    </subcellularLocation>
</comment>
<comment type="developmental stage">
    <text evidence="2">Expression peaks at trophozoite stage and remains high.</text>
</comment>
<comment type="disruption phenotype">
    <text evidence="8">Conditional knockdown results in the failure of parasites to progress through the asexual stages (PubMed:37428074). No significant effects on gametocyte development (PubMed:37428074).</text>
</comment>
<comment type="miscellaneous">
    <text evidence="2 4 8">The expression levels parallel that of the L-lactate dehydrogenase and the glycolytic enzymes (PubMed:25669138). In contrast to human monocarboxylate transporters, is not sensitive to p-chloromercuribenzene sulfonate (pCMBS) (PubMed:25669138). BH267.meta inhibitor attacks parasites at the trophozoite stage (PubMed:37428074). Inhibition of the protein leads to a build-up of lactate and swelling of the parasite and infected erythrocyte (PubMed:28178359).</text>
</comment>
<comment type="similarity">
    <text evidence="14">Belongs to the FNT transporter (TC 1.A.16) family.</text>
</comment>